<evidence type="ECO:0000255" key="1">
    <source>
        <dbReference type="PROSITE-ProRule" id="PRU00319"/>
    </source>
</evidence>
<evidence type="ECO:0000269" key="2">
    <source>
    </source>
</evidence>
<feature type="chain" id="PRO_0000111739" description="HTH-type transcriptional regulator LrpB">
    <location>
        <begin position="1"/>
        <end position="149"/>
    </location>
</feature>
<feature type="domain" description="HTH asnC-type" evidence="1">
    <location>
        <begin position="3"/>
        <end position="64"/>
    </location>
</feature>
<feature type="DNA-binding region" description="H-T-H motif" evidence="1">
    <location>
        <begin position="22"/>
        <end position="41"/>
    </location>
</feature>
<reference key="1">
    <citation type="journal article" date="1997" name="Mol. Microbiol.">
        <title>Alterations in the flow of one-carbon units affect KinB-dependent sporulation in Bacillus subtilis.</title>
        <authorList>
            <person name="Dartois V."/>
            <person name="Liu J."/>
            <person name="Hoch J.A."/>
        </authorList>
    </citation>
    <scope>NUCLEOTIDE SEQUENCE [GENOMIC DNA]</scope>
    <scope>FUNCTION</scope>
    <source>
        <strain>168 / Marburg / ATCC 6051 / DSM 10 / JCM 1465 / NBRC 13719 / NCIMB 3610 / NRRL NRS-744 / VKM B-501</strain>
    </source>
</reference>
<reference key="2">
    <citation type="submission" date="1997-03" db="EMBL/GenBank/DDBJ databases">
        <title>A 148 kbp sequence of the region between 35 and 47 degree of the Bacillus subtilis genome.</title>
        <authorList>
            <person name="Kasahara Y."/>
            <person name="Nakai S."/>
            <person name="Lee S."/>
            <person name="Sadaie Y."/>
            <person name="Ogasawara N."/>
        </authorList>
    </citation>
    <scope>NUCLEOTIDE SEQUENCE [GENOMIC DNA]</scope>
    <source>
        <strain>168</strain>
    </source>
</reference>
<reference key="3">
    <citation type="journal article" date="1997" name="Nature">
        <title>The complete genome sequence of the Gram-positive bacterium Bacillus subtilis.</title>
        <authorList>
            <person name="Kunst F."/>
            <person name="Ogasawara N."/>
            <person name="Moszer I."/>
            <person name="Albertini A.M."/>
            <person name="Alloni G."/>
            <person name="Azevedo V."/>
            <person name="Bertero M.G."/>
            <person name="Bessieres P."/>
            <person name="Bolotin A."/>
            <person name="Borchert S."/>
            <person name="Borriss R."/>
            <person name="Boursier L."/>
            <person name="Brans A."/>
            <person name="Braun M."/>
            <person name="Brignell S.C."/>
            <person name="Bron S."/>
            <person name="Brouillet S."/>
            <person name="Bruschi C.V."/>
            <person name="Caldwell B."/>
            <person name="Capuano V."/>
            <person name="Carter N.M."/>
            <person name="Choi S.-K."/>
            <person name="Codani J.-J."/>
            <person name="Connerton I.F."/>
            <person name="Cummings N.J."/>
            <person name="Daniel R.A."/>
            <person name="Denizot F."/>
            <person name="Devine K.M."/>
            <person name="Duesterhoeft A."/>
            <person name="Ehrlich S.D."/>
            <person name="Emmerson P.T."/>
            <person name="Entian K.-D."/>
            <person name="Errington J."/>
            <person name="Fabret C."/>
            <person name="Ferrari E."/>
            <person name="Foulger D."/>
            <person name="Fritz C."/>
            <person name="Fujita M."/>
            <person name="Fujita Y."/>
            <person name="Fuma S."/>
            <person name="Galizzi A."/>
            <person name="Galleron N."/>
            <person name="Ghim S.-Y."/>
            <person name="Glaser P."/>
            <person name="Goffeau A."/>
            <person name="Golightly E.J."/>
            <person name="Grandi G."/>
            <person name="Guiseppi G."/>
            <person name="Guy B.J."/>
            <person name="Haga K."/>
            <person name="Haiech J."/>
            <person name="Harwood C.R."/>
            <person name="Henaut A."/>
            <person name="Hilbert H."/>
            <person name="Holsappel S."/>
            <person name="Hosono S."/>
            <person name="Hullo M.-F."/>
            <person name="Itaya M."/>
            <person name="Jones L.-M."/>
            <person name="Joris B."/>
            <person name="Karamata D."/>
            <person name="Kasahara Y."/>
            <person name="Klaerr-Blanchard M."/>
            <person name="Klein C."/>
            <person name="Kobayashi Y."/>
            <person name="Koetter P."/>
            <person name="Koningstein G."/>
            <person name="Krogh S."/>
            <person name="Kumano M."/>
            <person name="Kurita K."/>
            <person name="Lapidus A."/>
            <person name="Lardinois S."/>
            <person name="Lauber J."/>
            <person name="Lazarevic V."/>
            <person name="Lee S.-M."/>
            <person name="Levine A."/>
            <person name="Liu H."/>
            <person name="Masuda S."/>
            <person name="Mauel C."/>
            <person name="Medigue C."/>
            <person name="Medina N."/>
            <person name="Mellado R.P."/>
            <person name="Mizuno M."/>
            <person name="Moestl D."/>
            <person name="Nakai S."/>
            <person name="Noback M."/>
            <person name="Noone D."/>
            <person name="O'Reilly M."/>
            <person name="Ogawa K."/>
            <person name="Ogiwara A."/>
            <person name="Oudega B."/>
            <person name="Park S.-H."/>
            <person name="Parro V."/>
            <person name="Pohl T.M."/>
            <person name="Portetelle D."/>
            <person name="Porwollik S."/>
            <person name="Prescott A.M."/>
            <person name="Presecan E."/>
            <person name="Pujic P."/>
            <person name="Purnelle B."/>
            <person name="Rapoport G."/>
            <person name="Rey M."/>
            <person name="Reynolds S."/>
            <person name="Rieger M."/>
            <person name="Rivolta C."/>
            <person name="Rocha E."/>
            <person name="Roche B."/>
            <person name="Rose M."/>
            <person name="Sadaie Y."/>
            <person name="Sato T."/>
            <person name="Scanlan E."/>
            <person name="Schleich S."/>
            <person name="Schroeter R."/>
            <person name="Scoffone F."/>
            <person name="Sekiguchi J."/>
            <person name="Sekowska A."/>
            <person name="Seror S.J."/>
            <person name="Serror P."/>
            <person name="Shin B.-S."/>
            <person name="Soldo B."/>
            <person name="Sorokin A."/>
            <person name="Tacconi E."/>
            <person name="Takagi T."/>
            <person name="Takahashi H."/>
            <person name="Takemaru K."/>
            <person name="Takeuchi M."/>
            <person name="Tamakoshi A."/>
            <person name="Tanaka T."/>
            <person name="Terpstra P."/>
            <person name="Tognoni A."/>
            <person name="Tosato V."/>
            <person name="Uchiyama S."/>
            <person name="Vandenbol M."/>
            <person name="Vannier F."/>
            <person name="Vassarotti A."/>
            <person name="Viari A."/>
            <person name="Wambutt R."/>
            <person name="Wedler E."/>
            <person name="Wedler H."/>
            <person name="Weitzenegger T."/>
            <person name="Winters P."/>
            <person name="Wipat A."/>
            <person name="Yamamoto H."/>
            <person name="Yamane K."/>
            <person name="Yasumoto K."/>
            <person name="Yata K."/>
            <person name="Yoshida K."/>
            <person name="Yoshikawa H.-F."/>
            <person name="Zumstein E."/>
            <person name="Yoshikawa H."/>
            <person name="Danchin A."/>
        </authorList>
    </citation>
    <scope>NUCLEOTIDE SEQUENCE [LARGE SCALE GENOMIC DNA]</scope>
    <source>
        <strain>168</strain>
    </source>
</reference>
<organism>
    <name type="scientific">Bacillus subtilis (strain 168)</name>
    <dbReference type="NCBI Taxonomy" id="224308"/>
    <lineage>
        <taxon>Bacteria</taxon>
        <taxon>Bacillati</taxon>
        <taxon>Bacillota</taxon>
        <taxon>Bacilli</taxon>
        <taxon>Bacillales</taxon>
        <taxon>Bacillaceae</taxon>
        <taxon>Bacillus</taxon>
    </lineage>
</organism>
<comment type="function">
    <text evidence="2">Negative regulation of glyA transcription and kinB-dependent sporulation.</text>
</comment>
<proteinExistence type="predicted"/>
<sequence>MQIDSIDFQILQLLNKNARIQWKEIGEKIHMTGQAVGNRIKKMEDNGIIKAYSIVVDELKMGFSFTAFVFFFMNAYMHDDLLKFIATRNEISEAHRVSGDACYLLKVTVHSQEVLNHLLNDLLKYGNYQLYLSIKEVKKHYNTSLMSDE</sequence>
<dbReference type="EMBL" id="L44122">
    <property type="protein sequence ID" value="AAR24606.1"/>
    <property type="molecule type" value="Genomic_DNA"/>
</dbReference>
<dbReference type="EMBL" id="AB001488">
    <property type="protein sequence ID" value="BAA19342.1"/>
    <property type="molecule type" value="Genomic_DNA"/>
</dbReference>
<dbReference type="EMBL" id="AL009126">
    <property type="protein sequence ID" value="CAB12313.1"/>
    <property type="molecule type" value="Genomic_DNA"/>
</dbReference>
<dbReference type="PIR" id="E69653">
    <property type="entry name" value="E69653"/>
</dbReference>
<dbReference type="RefSeq" id="NP_388387.1">
    <property type="nucleotide sequence ID" value="NC_000964.3"/>
</dbReference>
<dbReference type="RefSeq" id="WP_003246612.1">
    <property type="nucleotide sequence ID" value="NZ_OZ025638.1"/>
</dbReference>
<dbReference type="SMR" id="P96653"/>
<dbReference type="FunCoup" id="P96653">
    <property type="interactions" value="75"/>
</dbReference>
<dbReference type="STRING" id="224308.BSU05060"/>
<dbReference type="PaxDb" id="224308-BSU05060"/>
<dbReference type="EnsemblBacteria" id="CAB12313">
    <property type="protein sequence ID" value="CAB12313"/>
    <property type="gene ID" value="BSU_05060"/>
</dbReference>
<dbReference type="GeneID" id="939912"/>
<dbReference type="KEGG" id="bsu:BSU05060"/>
<dbReference type="PATRIC" id="fig|224308.179.peg.537"/>
<dbReference type="eggNOG" id="COG1522">
    <property type="taxonomic scope" value="Bacteria"/>
</dbReference>
<dbReference type="InParanoid" id="P96653"/>
<dbReference type="OrthoDB" id="34294at2"/>
<dbReference type="PhylomeDB" id="P96653"/>
<dbReference type="BioCyc" id="BSUB:BSU05060-MONOMER"/>
<dbReference type="Proteomes" id="UP000001570">
    <property type="component" value="Chromosome"/>
</dbReference>
<dbReference type="GO" id="GO:0005829">
    <property type="term" value="C:cytosol"/>
    <property type="evidence" value="ECO:0000318"/>
    <property type="project" value="GO_Central"/>
</dbReference>
<dbReference type="GO" id="GO:0043565">
    <property type="term" value="F:sequence-specific DNA binding"/>
    <property type="evidence" value="ECO:0000318"/>
    <property type="project" value="GO_Central"/>
</dbReference>
<dbReference type="GO" id="GO:0043200">
    <property type="term" value="P:response to amino acid"/>
    <property type="evidence" value="ECO:0000318"/>
    <property type="project" value="GO_Central"/>
</dbReference>
<dbReference type="FunFam" id="1.10.10.10:FF:000441">
    <property type="entry name" value="AsnC family transcriptional regulator"/>
    <property type="match status" value="1"/>
</dbReference>
<dbReference type="Gene3D" id="3.30.70.920">
    <property type="match status" value="1"/>
</dbReference>
<dbReference type="Gene3D" id="1.10.10.10">
    <property type="entry name" value="Winged helix-like DNA-binding domain superfamily/Winged helix DNA-binding domain"/>
    <property type="match status" value="1"/>
</dbReference>
<dbReference type="InterPro" id="IPR000485">
    <property type="entry name" value="AsnC-type_HTH_dom"/>
</dbReference>
<dbReference type="InterPro" id="IPR011008">
    <property type="entry name" value="Dimeric_a/b-barrel"/>
</dbReference>
<dbReference type="InterPro" id="IPR019888">
    <property type="entry name" value="Tscrpt_reg_AsnC-like"/>
</dbReference>
<dbReference type="InterPro" id="IPR019887">
    <property type="entry name" value="Tscrpt_reg_AsnC/Lrp_C"/>
</dbReference>
<dbReference type="InterPro" id="IPR036388">
    <property type="entry name" value="WH-like_DNA-bd_sf"/>
</dbReference>
<dbReference type="InterPro" id="IPR036390">
    <property type="entry name" value="WH_DNA-bd_sf"/>
</dbReference>
<dbReference type="PANTHER" id="PTHR30154:SF55">
    <property type="entry name" value="HTH-TYPE TRANSCRIPTIONAL REGULATOR LRPB"/>
    <property type="match status" value="1"/>
</dbReference>
<dbReference type="PANTHER" id="PTHR30154">
    <property type="entry name" value="LEUCINE-RESPONSIVE REGULATORY PROTEIN"/>
    <property type="match status" value="1"/>
</dbReference>
<dbReference type="Pfam" id="PF01037">
    <property type="entry name" value="AsnC_trans_reg"/>
    <property type="match status" value="1"/>
</dbReference>
<dbReference type="Pfam" id="PF13404">
    <property type="entry name" value="HTH_AsnC-type"/>
    <property type="match status" value="1"/>
</dbReference>
<dbReference type="PRINTS" id="PR00033">
    <property type="entry name" value="HTHASNC"/>
</dbReference>
<dbReference type="SMART" id="SM00344">
    <property type="entry name" value="HTH_ASNC"/>
    <property type="match status" value="1"/>
</dbReference>
<dbReference type="SUPFAM" id="SSF54909">
    <property type="entry name" value="Dimeric alpha+beta barrel"/>
    <property type="match status" value="1"/>
</dbReference>
<dbReference type="SUPFAM" id="SSF46785">
    <property type="entry name" value="Winged helix' DNA-binding domain"/>
    <property type="match status" value="1"/>
</dbReference>
<dbReference type="PROSITE" id="PS50956">
    <property type="entry name" value="HTH_ASNC_2"/>
    <property type="match status" value="1"/>
</dbReference>
<name>LRPB_BACSU</name>
<accession>P96653</accession>
<protein>
    <recommendedName>
        <fullName>HTH-type transcriptional regulator LrpB</fullName>
    </recommendedName>
</protein>
<keyword id="KW-0238">DNA-binding</keyword>
<keyword id="KW-1185">Reference proteome</keyword>
<keyword id="KW-0678">Repressor</keyword>
<keyword id="KW-0804">Transcription</keyword>
<keyword id="KW-0805">Transcription regulation</keyword>
<gene>
    <name type="primary">lrpB</name>
    <name type="synonym">yddP</name>
    <name type="ordered locus">BSU05060</name>
</gene>